<dbReference type="EMBL" id="CP000552">
    <property type="protein sequence ID" value="ABM71566.1"/>
    <property type="molecule type" value="Genomic_DNA"/>
</dbReference>
<dbReference type="RefSeq" id="WP_011819674.1">
    <property type="nucleotide sequence ID" value="NC_008817.1"/>
</dbReference>
<dbReference type="SMR" id="A2BUV5"/>
<dbReference type="STRING" id="167542.P9515_03571"/>
<dbReference type="GeneID" id="60200407"/>
<dbReference type="KEGG" id="pmc:P9515_03571"/>
<dbReference type="eggNOG" id="COG1290">
    <property type="taxonomic scope" value="Bacteria"/>
</dbReference>
<dbReference type="HOGENOM" id="CLU_031114_0_2_3"/>
<dbReference type="OrthoDB" id="9804503at2"/>
<dbReference type="Proteomes" id="UP000001589">
    <property type="component" value="Chromosome"/>
</dbReference>
<dbReference type="GO" id="GO:0031676">
    <property type="term" value="C:plasma membrane-derived thylakoid membrane"/>
    <property type="evidence" value="ECO:0007669"/>
    <property type="project" value="UniProtKB-SubCell"/>
</dbReference>
<dbReference type="GO" id="GO:0045158">
    <property type="term" value="F:electron transporter, transferring electrons within cytochrome b6/f complex of photosystem II activity"/>
    <property type="evidence" value="ECO:0007669"/>
    <property type="project" value="UniProtKB-UniRule"/>
</dbReference>
<dbReference type="GO" id="GO:0046872">
    <property type="term" value="F:metal ion binding"/>
    <property type="evidence" value="ECO:0007669"/>
    <property type="project" value="UniProtKB-KW"/>
</dbReference>
<dbReference type="GO" id="GO:0016491">
    <property type="term" value="F:oxidoreductase activity"/>
    <property type="evidence" value="ECO:0007669"/>
    <property type="project" value="InterPro"/>
</dbReference>
<dbReference type="GO" id="GO:0015979">
    <property type="term" value="P:photosynthesis"/>
    <property type="evidence" value="ECO:0007669"/>
    <property type="project" value="UniProtKB-UniRule"/>
</dbReference>
<dbReference type="GO" id="GO:0022904">
    <property type="term" value="P:respiratory electron transport chain"/>
    <property type="evidence" value="ECO:0007669"/>
    <property type="project" value="InterPro"/>
</dbReference>
<dbReference type="CDD" id="cd00284">
    <property type="entry name" value="Cytochrome_b_N"/>
    <property type="match status" value="1"/>
</dbReference>
<dbReference type="Gene3D" id="1.20.810.10">
    <property type="entry name" value="Cytochrome Bc1 Complex, Chain C"/>
    <property type="match status" value="1"/>
</dbReference>
<dbReference type="HAMAP" id="MF_00633">
    <property type="entry name" value="Cytb6_f_cytb6"/>
    <property type="match status" value="1"/>
</dbReference>
<dbReference type="InterPro" id="IPR005797">
    <property type="entry name" value="Cyt_b/b6_N"/>
</dbReference>
<dbReference type="InterPro" id="IPR023530">
    <property type="entry name" value="Cyt_B6_PetB"/>
</dbReference>
<dbReference type="InterPro" id="IPR027387">
    <property type="entry name" value="Cytb/b6-like_sf"/>
</dbReference>
<dbReference type="InterPro" id="IPR048259">
    <property type="entry name" value="Cytochrome_b_N_euk/bac"/>
</dbReference>
<dbReference type="InterPro" id="IPR016174">
    <property type="entry name" value="Di-haem_cyt_TM"/>
</dbReference>
<dbReference type="NCBIfam" id="NF002990">
    <property type="entry name" value="PRK03735.1"/>
    <property type="match status" value="1"/>
</dbReference>
<dbReference type="PANTHER" id="PTHR19271">
    <property type="entry name" value="CYTOCHROME B"/>
    <property type="match status" value="1"/>
</dbReference>
<dbReference type="PANTHER" id="PTHR19271:SF16">
    <property type="entry name" value="CYTOCHROME B"/>
    <property type="match status" value="1"/>
</dbReference>
<dbReference type="Pfam" id="PF00033">
    <property type="entry name" value="Cytochrome_B"/>
    <property type="match status" value="1"/>
</dbReference>
<dbReference type="PIRSF" id="PIRSF000032">
    <property type="entry name" value="Cytochrome_b6"/>
    <property type="match status" value="1"/>
</dbReference>
<dbReference type="SUPFAM" id="SSF81342">
    <property type="entry name" value="Transmembrane di-heme cytochromes"/>
    <property type="match status" value="1"/>
</dbReference>
<dbReference type="PROSITE" id="PS51002">
    <property type="entry name" value="CYTB_NTER"/>
    <property type="match status" value="1"/>
</dbReference>
<name>CYB6_PROM5</name>
<organism>
    <name type="scientific">Prochlorococcus marinus (strain MIT 9515)</name>
    <dbReference type="NCBI Taxonomy" id="167542"/>
    <lineage>
        <taxon>Bacteria</taxon>
        <taxon>Bacillati</taxon>
        <taxon>Cyanobacteriota</taxon>
        <taxon>Cyanophyceae</taxon>
        <taxon>Synechococcales</taxon>
        <taxon>Prochlorococcaceae</taxon>
        <taxon>Prochlorococcus</taxon>
    </lineage>
</organism>
<evidence type="ECO:0000255" key="1">
    <source>
        <dbReference type="HAMAP-Rule" id="MF_00633"/>
    </source>
</evidence>
<gene>
    <name evidence="1" type="primary">petB</name>
    <name type="ordered locus">P9515_03571</name>
</gene>
<proteinExistence type="inferred from homology"/>
<feature type="chain" id="PRO_1000061411" description="Cytochrome b6">
    <location>
        <begin position="1"/>
        <end position="218"/>
    </location>
</feature>
<feature type="transmembrane region" description="Helical" evidence="1">
    <location>
        <begin position="35"/>
        <end position="55"/>
    </location>
</feature>
<feature type="transmembrane region" description="Helical" evidence="1">
    <location>
        <begin position="93"/>
        <end position="113"/>
    </location>
</feature>
<feature type="transmembrane region" description="Helical" evidence="1">
    <location>
        <begin position="119"/>
        <end position="139"/>
    </location>
</feature>
<feature type="transmembrane region" description="Helical" evidence="1">
    <location>
        <begin position="189"/>
        <end position="209"/>
    </location>
</feature>
<feature type="binding site" description="covalent" evidence="1">
    <location>
        <position position="38"/>
    </location>
    <ligand>
        <name>heme c</name>
        <dbReference type="ChEBI" id="CHEBI:61717"/>
    </ligand>
</feature>
<feature type="binding site" description="axial binding residue" evidence="1">
    <location>
        <position position="89"/>
    </location>
    <ligand>
        <name>heme b</name>
        <dbReference type="ChEBI" id="CHEBI:60344"/>
        <label>2</label>
    </ligand>
    <ligandPart>
        <name>Fe</name>
        <dbReference type="ChEBI" id="CHEBI:18248"/>
    </ligandPart>
</feature>
<feature type="binding site" description="axial binding residue" evidence="1">
    <location>
        <position position="103"/>
    </location>
    <ligand>
        <name>heme b</name>
        <dbReference type="ChEBI" id="CHEBI:60344"/>
        <label>1</label>
    </ligand>
    <ligandPart>
        <name>Fe</name>
        <dbReference type="ChEBI" id="CHEBI:18248"/>
    </ligandPart>
</feature>
<feature type="binding site" description="axial binding residue" evidence="1">
    <location>
        <position position="190"/>
    </location>
    <ligand>
        <name>heme b</name>
        <dbReference type="ChEBI" id="CHEBI:60344"/>
        <label>2</label>
    </ligand>
    <ligandPart>
        <name>Fe</name>
        <dbReference type="ChEBI" id="CHEBI:18248"/>
    </ligandPart>
</feature>
<feature type="binding site" description="axial binding residue" evidence="1">
    <location>
        <position position="205"/>
    </location>
    <ligand>
        <name>heme b</name>
        <dbReference type="ChEBI" id="CHEBI:60344"/>
        <label>1</label>
    </ligand>
    <ligandPart>
        <name>Fe</name>
        <dbReference type="ChEBI" id="CHEBI:18248"/>
    </ligandPart>
</feature>
<keyword id="KW-0249">Electron transport</keyword>
<keyword id="KW-0349">Heme</keyword>
<keyword id="KW-0408">Iron</keyword>
<keyword id="KW-0472">Membrane</keyword>
<keyword id="KW-0479">Metal-binding</keyword>
<keyword id="KW-0602">Photosynthesis</keyword>
<keyword id="KW-0793">Thylakoid</keyword>
<keyword id="KW-0812">Transmembrane</keyword>
<keyword id="KW-1133">Transmembrane helix</keyword>
<keyword id="KW-0813">Transport</keyword>
<sequence>MSNSSSVYDWFQERLEIQDITDDVTSKYVPPHVNIFYCLGGITLVCFLIQFATGFAMTFYYKPTVTQAYNSVSYLMTDVSFGWLIRSVHRWSASMMVLMLILHVFRVYLTGGFKRPRELTWVTGVVMAVITVAFGVTGYSLPWDQVGYWAVKIVSGVPAAIPIIGDFMVELLRGGESVGQSTLTRFYSLHTFVLPWSLAVFMLMHFLMIRKQGISGPL</sequence>
<accession>A2BUV5</accession>
<protein>
    <recommendedName>
        <fullName evidence="1">Cytochrome b6</fullName>
    </recommendedName>
</protein>
<comment type="function">
    <text evidence="1">Component of the cytochrome b6-f complex, which mediates electron transfer between photosystem II (PSII) and photosystem I (PSI), cyclic electron flow around PSI, and state transitions.</text>
</comment>
<comment type="cofactor">
    <cofactor evidence="1">
        <name>heme b</name>
        <dbReference type="ChEBI" id="CHEBI:60344"/>
    </cofactor>
    <text evidence="1">Binds 2 heme b groups non-covalently with two histidine residues as axial ligands.</text>
</comment>
<comment type="cofactor">
    <cofactor evidence="1">
        <name>heme c</name>
        <dbReference type="ChEBI" id="CHEBI:61717"/>
    </cofactor>
    <text evidence="1">Binds one heme group covalently by a single cysteine link with no axial amino acid ligand. This heme was named heme ci.</text>
</comment>
<comment type="subunit">
    <text evidence="1">The 4 large subunits of the cytochrome b6-f complex are cytochrome b6, subunit IV (17 kDa polypeptide, PetD), cytochrome f and the Rieske protein, while the 4 small subunits are PetG, PetL, PetM and PetN. The complex functions as a dimer.</text>
</comment>
<comment type="subcellular location">
    <subcellularLocation>
        <location evidence="1">Cellular thylakoid membrane</location>
        <topology evidence="1">Multi-pass membrane protein</topology>
    </subcellularLocation>
</comment>
<comment type="miscellaneous">
    <text evidence="1">Heme 1 (or BH or b566) is high-potential and absorbs at about 566 nm, and heme 2 (or BL or b562) is low-potential and absorbs at about 562 nm.</text>
</comment>
<comment type="similarity">
    <text evidence="1">Belongs to the cytochrome b family. PetB subfamily.</text>
</comment>
<reference key="1">
    <citation type="journal article" date="2007" name="PLoS Genet.">
        <title>Patterns and implications of gene gain and loss in the evolution of Prochlorococcus.</title>
        <authorList>
            <person name="Kettler G.C."/>
            <person name="Martiny A.C."/>
            <person name="Huang K."/>
            <person name="Zucker J."/>
            <person name="Coleman M.L."/>
            <person name="Rodrigue S."/>
            <person name="Chen F."/>
            <person name="Lapidus A."/>
            <person name="Ferriera S."/>
            <person name="Johnson J."/>
            <person name="Steglich C."/>
            <person name="Church G.M."/>
            <person name="Richardson P."/>
            <person name="Chisholm S.W."/>
        </authorList>
    </citation>
    <scope>NUCLEOTIDE SEQUENCE [LARGE SCALE GENOMIC DNA]</scope>
    <source>
        <strain>MIT 9515</strain>
    </source>
</reference>